<dbReference type="EC" id="3.6.4.-" evidence="1"/>
<dbReference type="EMBL" id="CP000304">
    <property type="protein sequence ID" value="ABP80615.1"/>
    <property type="molecule type" value="Genomic_DNA"/>
</dbReference>
<dbReference type="RefSeq" id="WP_011914070.1">
    <property type="nucleotide sequence ID" value="NC_009434.1"/>
</dbReference>
<dbReference type="SMR" id="A4VNR4"/>
<dbReference type="KEGG" id="psa:PST_2969"/>
<dbReference type="eggNOG" id="COG0553">
    <property type="taxonomic scope" value="Bacteria"/>
</dbReference>
<dbReference type="HOGENOM" id="CLU_011520_0_0_6"/>
<dbReference type="Proteomes" id="UP000000233">
    <property type="component" value="Chromosome"/>
</dbReference>
<dbReference type="GO" id="GO:0005524">
    <property type="term" value="F:ATP binding"/>
    <property type="evidence" value="ECO:0007669"/>
    <property type="project" value="UniProtKB-UniRule"/>
</dbReference>
<dbReference type="GO" id="GO:0003677">
    <property type="term" value="F:DNA binding"/>
    <property type="evidence" value="ECO:0007669"/>
    <property type="project" value="UniProtKB-KW"/>
</dbReference>
<dbReference type="GO" id="GO:0004386">
    <property type="term" value="F:helicase activity"/>
    <property type="evidence" value="ECO:0007669"/>
    <property type="project" value="UniProtKB-UniRule"/>
</dbReference>
<dbReference type="GO" id="GO:0016817">
    <property type="term" value="F:hydrolase activity, acting on acid anhydrides"/>
    <property type="evidence" value="ECO:0007669"/>
    <property type="project" value="InterPro"/>
</dbReference>
<dbReference type="GO" id="GO:0006355">
    <property type="term" value="P:regulation of DNA-templated transcription"/>
    <property type="evidence" value="ECO:0007669"/>
    <property type="project" value="UniProtKB-UniRule"/>
</dbReference>
<dbReference type="CDD" id="cd18011">
    <property type="entry name" value="DEXDc_RapA"/>
    <property type="match status" value="1"/>
</dbReference>
<dbReference type="CDD" id="cd18793">
    <property type="entry name" value="SF2_C_SNF"/>
    <property type="match status" value="1"/>
</dbReference>
<dbReference type="Gene3D" id="2.30.30.140">
    <property type="match status" value="1"/>
</dbReference>
<dbReference type="Gene3D" id="2.30.30.930">
    <property type="match status" value="1"/>
</dbReference>
<dbReference type="Gene3D" id="3.30.360.80">
    <property type="match status" value="1"/>
</dbReference>
<dbReference type="Gene3D" id="6.10.140.1500">
    <property type="match status" value="1"/>
</dbReference>
<dbReference type="Gene3D" id="6.10.140.2230">
    <property type="match status" value="1"/>
</dbReference>
<dbReference type="Gene3D" id="3.40.50.300">
    <property type="entry name" value="P-loop containing nucleotide triphosphate hydrolases"/>
    <property type="match status" value="1"/>
</dbReference>
<dbReference type="Gene3D" id="3.40.50.10810">
    <property type="entry name" value="Tandem AAA-ATPase domain"/>
    <property type="match status" value="1"/>
</dbReference>
<dbReference type="HAMAP" id="MF_01821">
    <property type="entry name" value="Helicase_RapA"/>
    <property type="match status" value="1"/>
</dbReference>
<dbReference type="InterPro" id="IPR014001">
    <property type="entry name" value="Helicase_ATP-bd"/>
</dbReference>
<dbReference type="InterPro" id="IPR001650">
    <property type="entry name" value="Helicase_C-like"/>
</dbReference>
<dbReference type="InterPro" id="IPR023949">
    <property type="entry name" value="Helicase_RapA"/>
</dbReference>
<dbReference type="InterPro" id="IPR027417">
    <property type="entry name" value="P-loop_NTPase"/>
</dbReference>
<dbReference type="InterPro" id="IPR022737">
    <property type="entry name" value="RapA_C"/>
</dbReference>
<dbReference type="InterPro" id="IPR038718">
    <property type="entry name" value="SNF2-like_sf"/>
</dbReference>
<dbReference type="InterPro" id="IPR049730">
    <property type="entry name" value="SNF2/RAD54-like_C"/>
</dbReference>
<dbReference type="InterPro" id="IPR000330">
    <property type="entry name" value="SNF2_N"/>
</dbReference>
<dbReference type="InterPro" id="IPR040765">
    <property type="entry name" value="Tudor_1_RapA"/>
</dbReference>
<dbReference type="InterPro" id="IPR040766">
    <property type="entry name" value="Tudor_2_RapA"/>
</dbReference>
<dbReference type="NCBIfam" id="NF003426">
    <property type="entry name" value="PRK04914.1"/>
    <property type="match status" value="1"/>
</dbReference>
<dbReference type="PANTHER" id="PTHR45766">
    <property type="entry name" value="DNA ANNEALING HELICASE AND ENDONUCLEASE ZRANB3 FAMILY MEMBER"/>
    <property type="match status" value="1"/>
</dbReference>
<dbReference type="PANTHER" id="PTHR45766:SF6">
    <property type="entry name" value="SWI_SNF-RELATED MATRIX-ASSOCIATED ACTIN-DEPENDENT REGULATOR OF CHROMATIN SUBFAMILY A-LIKE PROTEIN 1"/>
    <property type="match status" value="1"/>
</dbReference>
<dbReference type="Pfam" id="PF00271">
    <property type="entry name" value="Helicase_C"/>
    <property type="match status" value="1"/>
</dbReference>
<dbReference type="Pfam" id="PF12137">
    <property type="entry name" value="RapA_C"/>
    <property type="match status" value="1"/>
</dbReference>
<dbReference type="Pfam" id="PF00176">
    <property type="entry name" value="SNF2-rel_dom"/>
    <property type="match status" value="1"/>
</dbReference>
<dbReference type="Pfam" id="PF18339">
    <property type="entry name" value="Tudor_1_RapA"/>
    <property type="match status" value="1"/>
</dbReference>
<dbReference type="Pfam" id="PF18337">
    <property type="entry name" value="Tudor_RapA"/>
    <property type="match status" value="1"/>
</dbReference>
<dbReference type="SMART" id="SM00487">
    <property type="entry name" value="DEXDc"/>
    <property type="match status" value="1"/>
</dbReference>
<dbReference type="SMART" id="SM00490">
    <property type="entry name" value="HELICc"/>
    <property type="match status" value="1"/>
</dbReference>
<dbReference type="SUPFAM" id="SSF52540">
    <property type="entry name" value="P-loop containing nucleoside triphosphate hydrolases"/>
    <property type="match status" value="2"/>
</dbReference>
<dbReference type="PROSITE" id="PS51192">
    <property type="entry name" value="HELICASE_ATP_BIND_1"/>
    <property type="match status" value="1"/>
</dbReference>
<dbReference type="PROSITE" id="PS51194">
    <property type="entry name" value="HELICASE_CTER"/>
    <property type="match status" value="1"/>
</dbReference>
<sequence>MAQQYLPGQRWISDSEAELGLGTILTQDGRMLTVLYPATGETRQYATRSAPLTRVRFVPGDEITHFEGWKMTVREVDDVDGLLVYHGLTAQNEARTLPETQLSNFIQFRLASDRLFAGQIDPLAWFSLRYHTLQHQSAQLQSSLWGLGGVRAQPIAHQLHIAKEVADRIAPRVLLADEVGLGKTIEAGLIIHRQLLSGRASRVLILVPENLQHQWLVEMRRRFNLEVALFDAERFIESDASNPFEDTQLALVSLEWLKEDERAQDAAFAAGWDLLVVDEAHHLVWHPESASAEYRLVEQLAEVIPGVLLLTATPEQLGLDSHFARLRLLDPNRFHDLDAFRAESSSYQPVAEAVQELLDEGRLSQQAHQTIHDFLGAEGEALLAAATDGDIEASSRLIRELLDRHGTGRLLFRNTRAAVQGFPERQLHPYPLPCPAEYMELPLGEHAELYPEVAFQSQQEPADEQNRWWQFDPRVEWLIDTLKMLKKYKVLVICAHAETALDLEDALRVRSGIPATVFHEGMSILERDRAAAYFADEEFGAQVLICSEIGSEGRNFQFSHHLVLFDLPAHPDLLEQRIGRLDRIGQQHTIQLHVPYLETSPQERLFKWYHEALNAFLATCPTGNALQHQFGPRLLPLLEDGDDDTFQGLIDEARAERERLEAELHAGRDRLLELNSGGGEQGTALVDAIEEQDDQFALPIYMEQLFDAFGIDSEDHSENALVLRPSEKMLDASFPLGDDEAVTITYDREQALAREDMQFLTWEHPMVQGGMDLVLSGSMGNTAVALIKNKALKPGTVLLELLFVSEVVAPRALQLSRFLPPLALRCLLDGNGNDLAAKVAFDTLNDQLESVPRASANKFVQAQRDVLATQIAAAEAKIKPRHVERVAEAQRKLKAGLDEELARLVALQAVNPSVRDSEIEALRQQREDGLAALEKAALRLEAIRVLVAG</sequence>
<comment type="function">
    <text evidence="1">Transcription regulator that activates transcription by stimulating RNA polymerase (RNAP) recycling in case of stress conditions such as supercoiled DNA or high salt concentrations. Probably acts by releasing the RNAP, when it is trapped or immobilized on tightly supercoiled DNA. Does not activate transcription on linear DNA. Probably not involved in DNA repair.</text>
</comment>
<comment type="subunit">
    <text evidence="1">Interacts with the RNAP. Has a higher affinity for the core RNAP than for the holoenzyme. Its ATPase activity is stimulated by binding to RNAP.</text>
</comment>
<comment type="similarity">
    <text evidence="1">Belongs to the SNF2/RAD54 helicase family. RapA subfamily.</text>
</comment>
<evidence type="ECO:0000255" key="1">
    <source>
        <dbReference type="HAMAP-Rule" id="MF_01821"/>
    </source>
</evidence>
<reference key="1">
    <citation type="journal article" date="2008" name="Proc. Natl. Acad. Sci. U.S.A.">
        <title>Nitrogen fixation island and rhizosphere competence traits in the genome of root-associated Pseudomonas stutzeri A1501.</title>
        <authorList>
            <person name="Yan Y."/>
            <person name="Yang J."/>
            <person name="Dou Y."/>
            <person name="Chen M."/>
            <person name="Ping S."/>
            <person name="Peng J."/>
            <person name="Lu W."/>
            <person name="Zhang W."/>
            <person name="Yao Z."/>
            <person name="Li H."/>
            <person name="Liu W."/>
            <person name="He S."/>
            <person name="Geng L."/>
            <person name="Zhang X."/>
            <person name="Yang F."/>
            <person name="Yu H."/>
            <person name="Zhan Y."/>
            <person name="Li D."/>
            <person name="Lin Z."/>
            <person name="Wang Y."/>
            <person name="Elmerich C."/>
            <person name="Lin M."/>
            <person name="Jin Q."/>
        </authorList>
    </citation>
    <scope>NUCLEOTIDE SEQUENCE [LARGE SCALE GENOMIC DNA]</scope>
    <source>
        <strain>A1501</strain>
    </source>
</reference>
<accession>A4VNR4</accession>
<keyword id="KW-0010">Activator</keyword>
<keyword id="KW-0067">ATP-binding</keyword>
<keyword id="KW-0238">DNA-binding</keyword>
<keyword id="KW-0347">Helicase</keyword>
<keyword id="KW-0378">Hydrolase</keyword>
<keyword id="KW-0547">Nucleotide-binding</keyword>
<keyword id="KW-1185">Reference proteome</keyword>
<keyword id="KW-0804">Transcription</keyword>
<keyword id="KW-0805">Transcription regulation</keyword>
<feature type="chain" id="PRO_1000088371" description="RNA polymerase-associated protein RapA">
    <location>
        <begin position="1"/>
        <end position="949"/>
    </location>
</feature>
<feature type="domain" description="Helicase ATP-binding" evidence="1">
    <location>
        <begin position="164"/>
        <end position="332"/>
    </location>
</feature>
<feature type="domain" description="Helicase C-terminal" evidence="1">
    <location>
        <begin position="474"/>
        <end position="628"/>
    </location>
</feature>
<feature type="short sequence motif" description="DEAH box">
    <location>
        <begin position="278"/>
        <end position="281"/>
    </location>
</feature>
<feature type="binding site" evidence="1">
    <location>
        <begin position="177"/>
        <end position="184"/>
    </location>
    <ligand>
        <name>ATP</name>
        <dbReference type="ChEBI" id="CHEBI:30616"/>
    </ligand>
</feature>
<protein>
    <recommendedName>
        <fullName evidence="1">RNA polymerase-associated protein RapA</fullName>
        <ecNumber evidence="1">3.6.4.-</ecNumber>
    </recommendedName>
    <alternativeName>
        <fullName evidence="1">ATP-dependent helicase HepA</fullName>
    </alternativeName>
</protein>
<organism>
    <name type="scientific">Stutzerimonas stutzeri (strain A1501)</name>
    <name type="common">Pseudomonas stutzeri</name>
    <dbReference type="NCBI Taxonomy" id="379731"/>
    <lineage>
        <taxon>Bacteria</taxon>
        <taxon>Pseudomonadati</taxon>
        <taxon>Pseudomonadota</taxon>
        <taxon>Gammaproteobacteria</taxon>
        <taxon>Pseudomonadales</taxon>
        <taxon>Pseudomonadaceae</taxon>
        <taxon>Stutzerimonas</taxon>
    </lineage>
</organism>
<gene>
    <name evidence="1" type="primary">rapA</name>
    <name type="ordered locus">PST_2969</name>
</gene>
<name>RAPA_STUS1</name>
<proteinExistence type="inferred from homology"/>